<reference key="1">
    <citation type="journal article" date="1993" name="Genes Dev.">
        <title>Molecular cloning and characterization of dTAFII30 alpha and dTAFII30 beta: two small subunits of Drosophila TFIID.</title>
        <authorList>
            <person name="Yokomori K."/>
            <person name="Chen J.L."/>
            <person name="Admon A."/>
            <person name="Zhou S."/>
            <person name="Tjian R."/>
        </authorList>
    </citation>
    <scope>NUCLEOTIDE SEQUENCE [MRNA]</scope>
    <scope>INTERACTION WITH TAF2 AND TAF4</scope>
</reference>
<reference key="2">
    <citation type="submission" date="1994-02" db="EMBL/GenBank/DDBJ databases">
        <title>Molecular cloning of the 28 kDa subunit (p28b) of Drosophila transcription initiation factor TFIID.</title>
        <authorList>
            <person name="Nakatani Y."/>
        </authorList>
    </citation>
    <scope>NUCLEOTIDE SEQUENCE [MRNA]</scope>
</reference>
<reference key="3">
    <citation type="journal article" date="2000" name="Science">
        <title>The genome sequence of Drosophila melanogaster.</title>
        <authorList>
            <person name="Adams M.D."/>
            <person name="Celniker S.E."/>
            <person name="Holt R.A."/>
            <person name="Evans C.A."/>
            <person name="Gocayne J.D."/>
            <person name="Amanatides P.G."/>
            <person name="Scherer S.E."/>
            <person name="Li P.W."/>
            <person name="Hoskins R.A."/>
            <person name="Galle R.F."/>
            <person name="George R.A."/>
            <person name="Lewis S.E."/>
            <person name="Richards S."/>
            <person name="Ashburner M."/>
            <person name="Henderson S.N."/>
            <person name="Sutton G.G."/>
            <person name="Wortman J.R."/>
            <person name="Yandell M.D."/>
            <person name="Zhang Q."/>
            <person name="Chen L.X."/>
            <person name="Brandon R.C."/>
            <person name="Rogers Y.-H.C."/>
            <person name="Blazej R.G."/>
            <person name="Champe M."/>
            <person name="Pfeiffer B.D."/>
            <person name="Wan K.H."/>
            <person name="Doyle C."/>
            <person name="Baxter E.G."/>
            <person name="Helt G."/>
            <person name="Nelson C.R."/>
            <person name="Miklos G.L.G."/>
            <person name="Abril J.F."/>
            <person name="Agbayani A."/>
            <person name="An H.-J."/>
            <person name="Andrews-Pfannkoch C."/>
            <person name="Baldwin D."/>
            <person name="Ballew R.M."/>
            <person name="Basu A."/>
            <person name="Baxendale J."/>
            <person name="Bayraktaroglu L."/>
            <person name="Beasley E.M."/>
            <person name="Beeson K.Y."/>
            <person name="Benos P.V."/>
            <person name="Berman B.P."/>
            <person name="Bhandari D."/>
            <person name="Bolshakov S."/>
            <person name="Borkova D."/>
            <person name="Botchan M.R."/>
            <person name="Bouck J."/>
            <person name="Brokstein P."/>
            <person name="Brottier P."/>
            <person name="Burtis K.C."/>
            <person name="Busam D.A."/>
            <person name="Butler H."/>
            <person name="Cadieu E."/>
            <person name="Center A."/>
            <person name="Chandra I."/>
            <person name="Cherry J.M."/>
            <person name="Cawley S."/>
            <person name="Dahlke C."/>
            <person name="Davenport L.B."/>
            <person name="Davies P."/>
            <person name="de Pablos B."/>
            <person name="Delcher A."/>
            <person name="Deng Z."/>
            <person name="Mays A.D."/>
            <person name="Dew I."/>
            <person name="Dietz S.M."/>
            <person name="Dodson K."/>
            <person name="Doup L.E."/>
            <person name="Downes M."/>
            <person name="Dugan-Rocha S."/>
            <person name="Dunkov B.C."/>
            <person name="Dunn P."/>
            <person name="Durbin K.J."/>
            <person name="Evangelista C.C."/>
            <person name="Ferraz C."/>
            <person name="Ferriera S."/>
            <person name="Fleischmann W."/>
            <person name="Fosler C."/>
            <person name="Gabrielian A.E."/>
            <person name="Garg N.S."/>
            <person name="Gelbart W.M."/>
            <person name="Glasser K."/>
            <person name="Glodek A."/>
            <person name="Gong F."/>
            <person name="Gorrell J.H."/>
            <person name="Gu Z."/>
            <person name="Guan P."/>
            <person name="Harris M."/>
            <person name="Harris N.L."/>
            <person name="Harvey D.A."/>
            <person name="Heiman T.J."/>
            <person name="Hernandez J.R."/>
            <person name="Houck J."/>
            <person name="Hostin D."/>
            <person name="Houston K.A."/>
            <person name="Howland T.J."/>
            <person name="Wei M.-H."/>
            <person name="Ibegwam C."/>
            <person name="Jalali M."/>
            <person name="Kalush F."/>
            <person name="Karpen G.H."/>
            <person name="Ke Z."/>
            <person name="Kennison J.A."/>
            <person name="Ketchum K.A."/>
            <person name="Kimmel B.E."/>
            <person name="Kodira C.D."/>
            <person name="Kraft C.L."/>
            <person name="Kravitz S."/>
            <person name="Kulp D."/>
            <person name="Lai Z."/>
            <person name="Lasko P."/>
            <person name="Lei Y."/>
            <person name="Levitsky A.A."/>
            <person name="Li J.H."/>
            <person name="Li Z."/>
            <person name="Liang Y."/>
            <person name="Lin X."/>
            <person name="Liu X."/>
            <person name="Mattei B."/>
            <person name="McIntosh T.C."/>
            <person name="McLeod M.P."/>
            <person name="McPherson D."/>
            <person name="Merkulov G."/>
            <person name="Milshina N.V."/>
            <person name="Mobarry C."/>
            <person name="Morris J."/>
            <person name="Moshrefi A."/>
            <person name="Mount S.M."/>
            <person name="Moy M."/>
            <person name="Murphy B."/>
            <person name="Murphy L."/>
            <person name="Muzny D.M."/>
            <person name="Nelson D.L."/>
            <person name="Nelson D.R."/>
            <person name="Nelson K.A."/>
            <person name="Nixon K."/>
            <person name="Nusskern D.R."/>
            <person name="Pacleb J.M."/>
            <person name="Palazzolo M."/>
            <person name="Pittman G.S."/>
            <person name="Pan S."/>
            <person name="Pollard J."/>
            <person name="Puri V."/>
            <person name="Reese M.G."/>
            <person name="Reinert K."/>
            <person name="Remington K."/>
            <person name="Saunders R.D.C."/>
            <person name="Scheeler F."/>
            <person name="Shen H."/>
            <person name="Shue B.C."/>
            <person name="Siden-Kiamos I."/>
            <person name="Simpson M."/>
            <person name="Skupski M.P."/>
            <person name="Smith T.J."/>
            <person name="Spier E."/>
            <person name="Spradling A.C."/>
            <person name="Stapleton M."/>
            <person name="Strong R."/>
            <person name="Sun E."/>
            <person name="Svirskas R."/>
            <person name="Tector C."/>
            <person name="Turner R."/>
            <person name="Venter E."/>
            <person name="Wang A.H."/>
            <person name="Wang X."/>
            <person name="Wang Z.-Y."/>
            <person name="Wassarman D.A."/>
            <person name="Weinstock G.M."/>
            <person name="Weissenbach J."/>
            <person name="Williams S.M."/>
            <person name="Woodage T."/>
            <person name="Worley K.C."/>
            <person name="Wu D."/>
            <person name="Yang S."/>
            <person name="Yao Q.A."/>
            <person name="Ye J."/>
            <person name="Yeh R.-F."/>
            <person name="Zaveri J.S."/>
            <person name="Zhan M."/>
            <person name="Zhang G."/>
            <person name="Zhao Q."/>
            <person name="Zheng L."/>
            <person name="Zheng X.H."/>
            <person name="Zhong F.N."/>
            <person name="Zhong W."/>
            <person name="Zhou X."/>
            <person name="Zhu S.C."/>
            <person name="Zhu X."/>
            <person name="Smith H.O."/>
            <person name="Gibbs R.A."/>
            <person name="Myers E.W."/>
            <person name="Rubin G.M."/>
            <person name="Venter J.C."/>
        </authorList>
    </citation>
    <scope>NUCLEOTIDE SEQUENCE [LARGE SCALE GENOMIC DNA]</scope>
    <source>
        <strain>Berkeley</strain>
    </source>
</reference>
<reference key="4">
    <citation type="journal article" date="2002" name="Genome Biol.">
        <title>Annotation of the Drosophila melanogaster euchromatic genome: a systematic review.</title>
        <authorList>
            <person name="Misra S."/>
            <person name="Crosby M.A."/>
            <person name="Mungall C.J."/>
            <person name="Matthews B.B."/>
            <person name="Campbell K.S."/>
            <person name="Hradecky P."/>
            <person name="Huang Y."/>
            <person name="Kaminker J.S."/>
            <person name="Millburn G.H."/>
            <person name="Prochnik S.E."/>
            <person name="Smith C.D."/>
            <person name="Tupy J.L."/>
            <person name="Whitfield E.J."/>
            <person name="Bayraktaroglu L."/>
            <person name="Berman B.P."/>
            <person name="Bettencourt B.R."/>
            <person name="Celniker S.E."/>
            <person name="de Grey A.D.N.J."/>
            <person name="Drysdale R.A."/>
            <person name="Harris N.L."/>
            <person name="Richter J."/>
            <person name="Russo S."/>
            <person name="Schroeder A.J."/>
            <person name="Shu S.Q."/>
            <person name="Stapleton M."/>
            <person name="Yamada C."/>
            <person name="Ashburner M."/>
            <person name="Gelbart W.M."/>
            <person name="Rubin G.M."/>
            <person name="Lewis S.E."/>
        </authorList>
    </citation>
    <scope>GENOME REANNOTATION</scope>
    <source>
        <strain>Berkeley</strain>
    </source>
</reference>
<reference key="5">
    <citation type="journal article" date="2008" name="J. Proteome Res.">
        <title>Phosphoproteome analysis of Drosophila melanogaster embryos.</title>
        <authorList>
            <person name="Zhai B."/>
            <person name="Villen J."/>
            <person name="Beausoleil S.A."/>
            <person name="Mintseris J."/>
            <person name="Gygi S.P."/>
        </authorList>
    </citation>
    <scope>PHOSPHORYLATION [LARGE SCALE ANALYSIS] AT SER-14 AND SER-16</scope>
    <scope>IDENTIFICATION BY MASS SPECTROMETRY</scope>
    <source>
        <tissue>Embryo</tissue>
    </source>
</reference>
<reference key="6">
    <citation type="journal article" date="2015" name="Mol. Cell">
        <title>TAF11 Assembles the RISC Loading Complex to Enhance RNAi Efficiency.</title>
        <authorList>
            <person name="Liang C."/>
            <person name="Wang Y."/>
            <person name="Murota Y."/>
            <person name="Liu X."/>
            <person name="Smith D."/>
            <person name="Siomi M.C."/>
            <person name="Liu Q."/>
        </authorList>
    </citation>
    <scope>FUNCTION</scope>
    <scope>IDENTIFICATION IN THE SIRNA-RISC LOADING COMPLEX</scope>
    <scope>INTERACTION WITH DCR-2; R2D2 AND AGO2</scope>
    <scope>SUBCELLULAR LOCATION</scope>
    <scope>MUTAGENESIS OF 88-ARG--ASN-196 AND ALA-141</scope>
</reference>
<feature type="chain" id="PRO_0000118906" description="Transcription initiation factor TFIID subunit 11">
    <location>
        <begin position="1"/>
        <end position="196"/>
    </location>
</feature>
<feature type="region of interest" description="Disordered" evidence="2">
    <location>
        <begin position="1"/>
        <end position="88"/>
    </location>
</feature>
<feature type="compositionally biased region" description="Polar residues" evidence="2">
    <location>
        <begin position="7"/>
        <end position="16"/>
    </location>
</feature>
<feature type="compositionally biased region" description="Basic and acidic residues" evidence="2">
    <location>
        <begin position="44"/>
        <end position="62"/>
    </location>
</feature>
<feature type="compositionally biased region" description="Basic and acidic residues" evidence="2">
    <location>
        <begin position="78"/>
        <end position="88"/>
    </location>
</feature>
<feature type="modified residue" description="Phosphoserine" evidence="3">
    <location>
        <position position="14"/>
    </location>
</feature>
<feature type="modified residue" description="Phosphoserine" evidence="3">
    <location>
        <position position="16"/>
    </location>
</feature>
<feature type="mutagenesis site" description="Lethal; survival is reduced to five days. Severely decreases dsRNA-induced RNAi silencing resulting in decreased production of endogenous siRNAs." evidence="4">
    <location>
        <begin position="88"/>
        <end position="196"/>
    </location>
</feature>
<feature type="mutagenesis site" description="Lethal; survival is reduced to five days. Abolishes assembly of the siRNA-directed RISC loading complex (siRLC) and, as a consequence, abolishes formation of the RNA-induced silencing complex (siRISC). No effect on the formation of the R2-D2-Initiator complex (RDI) or dsRNA-processing activity to generate siRNAs." evidence="4">
    <original>A</original>
    <variation>G</variation>
    <location>
        <position position="141"/>
    </location>
</feature>
<organism>
    <name type="scientific">Drosophila melanogaster</name>
    <name type="common">Fruit fly</name>
    <dbReference type="NCBI Taxonomy" id="7227"/>
    <lineage>
        <taxon>Eukaryota</taxon>
        <taxon>Metazoa</taxon>
        <taxon>Ecdysozoa</taxon>
        <taxon>Arthropoda</taxon>
        <taxon>Hexapoda</taxon>
        <taxon>Insecta</taxon>
        <taxon>Pterygota</taxon>
        <taxon>Neoptera</taxon>
        <taxon>Endopterygota</taxon>
        <taxon>Diptera</taxon>
        <taxon>Brachycera</taxon>
        <taxon>Muscomorpha</taxon>
        <taxon>Ephydroidea</taxon>
        <taxon>Drosophilidae</taxon>
        <taxon>Drosophila</taxon>
        <taxon>Sophophora</taxon>
    </lineage>
</organism>
<gene>
    <name type="primary">Taf11</name>
    <name type="synonym">TAF30-BETA</name>
    <name type="ORF">CG4079</name>
</gene>
<keyword id="KW-0963">Cytoplasm</keyword>
<keyword id="KW-0539">Nucleus</keyword>
<keyword id="KW-0597">Phosphoprotein</keyword>
<keyword id="KW-1185">Reference proteome</keyword>
<keyword id="KW-0804">Transcription</keyword>
<keyword id="KW-0805">Transcription regulation</keyword>
<protein>
    <recommendedName>
        <fullName>Transcription initiation factor TFIID subunit 11</fullName>
    </recommendedName>
    <alternativeName>
        <fullName>TAFII30 beta</fullName>
    </alternativeName>
    <alternativeName>
        <fullName>Transcription initiation factor TFIID 28 kDa subunit beta</fullName>
        <shortName>p28-beta</shortName>
    </alternativeName>
</protein>
<proteinExistence type="evidence at protein level"/>
<name>TAF11_DROME</name>
<sequence>MDEILFPTQQKSNSLSDGDDVDLKFFQSASGERKDSDTSDPGNDADRDGKDADGDNDNKNTDGDGDSGEPAHKKLKTKKELEEEERERMQVLVSNFTEEQLDRYEMYRRSAFPKAAVKRLMQTITGCSVSQNVVIAMSGIAKVFVGEVVEEALDVMEAQGESGALQPKFIREAVRRLRTKDRMPIGRYQQPYFRLN</sequence>
<evidence type="ECO:0000250" key="1">
    <source>
        <dbReference type="UniProtKB" id="Q15544"/>
    </source>
</evidence>
<evidence type="ECO:0000256" key="2">
    <source>
        <dbReference type="SAM" id="MobiDB-lite"/>
    </source>
</evidence>
<evidence type="ECO:0000269" key="3">
    <source>
    </source>
</evidence>
<evidence type="ECO:0000269" key="4">
    <source>
    </source>
</evidence>
<evidence type="ECO:0000269" key="5">
    <source>
    </source>
</evidence>
<evidence type="ECO:0000305" key="6"/>
<comment type="function">
    <text evidence="1 4">The TFIID basal transcription factor complex plays a major role in the initiation of RNA polymerase II (Pol II)-dependent transcription (By similarity). TFIID recognizes and binds promoters with or without a TATA box via its subunit TBP, a TATA-box-binding protein, and promotes assembly of the pre-initiation complex (PIC) (By similarity). Component of the short interfering RNAs (siRNAs)-directed RISC loading complex (siRLC) which acts in the dsRNA-mediated RNA interference (RNAi) pathway by siRNAs into the RNA-induced silencing complex (siRISC), the siRNA then serves as a guide to direct the siRISC to complementary endogenous or viral RNA transcripts for degradation or silencing (PubMed:26257286). Promotes formation of the siRLC by facilitating Dcr-2-R2D2 tetramerization to enhance siRNA binding and siRISC loading activities (PubMed:26257286).</text>
</comment>
<comment type="subunit">
    <text evidence="4 5">Belongs to the TFIID complex which is composed of TATA binding protein (Tbp) and a number of TBP-associated factors (TAFs) (PubMed:8276241). Interacts with Taf2 and Taf4 (PubMed:8276241). Component of the RISC loading complex (siRLC), composed of at least Dcr-2, r2d2 and Taf11, which loads duplex siRNA onto AGO2 to initiate formation of the RNA-induced silencing complex (siRISC) (PubMed:26257286). Interacts with Dcr-2, r2d2 and AGO2 (PubMed:26257286). Taf11 appears to form a tetramer which facilitates or stabilizes formation of the Dcr-2-r2d2 heterotetramer (PubMed:26257286).</text>
</comment>
<comment type="interaction">
    <interactant intactId="EBI-187533">
        <id>P49906</id>
    </interactant>
    <interactant intactId="EBI-176193">
        <id>Q9VJQ5</id>
        <label>NC2beta</label>
    </interactant>
    <organismsDiffer>false</organismsDiffer>
    <experiments>3</experiments>
</comment>
<comment type="interaction">
    <interactant intactId="EBI-187533">
        <id>P49906</id>
    </interactant>
    <interactant intactId="EBI-90043">
        <id>Q9VIP1</id>
        <label>Taf13</label>
    </interactant>
    <organismsDiffer>false</organismsDiffer>
    <experiments>4</experiments>
</comment>
<comment type="subcellular location">
    <subcellularLocation>
        <location evidence="4">Nucleus</location>
    </subcellularLocation>
    <subcellularLocation>
        <location evidence="4">Cytoplasm</location>
    </subcellularLocation>
    <subcellularLocation>
        <location evidence="4">Cytoplasm</location>
        <location evidence="4">Cytoplasmic ribonucleoprotein granule</location>
    </subcellularLocation>
    <text evidence="4">Localizes to cytoplasmic ribonucleoprotein granules called D2 bodies, through its association with the Dcr-2-r2d2 complex.</text>
</comment>
<comment type="similarity">
    <text evidence="6">Belongs to the TAF11 family.</text>
</comment>
<dbReference type="EMBL" id="S67660">
    <property type="protein sequence ID" value="AAB29541.1"/>
    <property type="molecule type" value="mRNA"/>
</dbReference>
<dbReference type="EMBL" id="U06457">
    <property type="protein sequence ID" value="AAB19245.1"/>
    <property type="molecule type" value="mRNA"/>
</dbReference>
<dbReference type="EMBL" id="AE014134">
    <property type="protein sequence ID" value="AAF52806.1"/>
    <property type="molecule type" value="Genomic_DNA"/>
</dbReference>
<dbReference type="PIR" id="B49453">
    <property type="entry name" value="B49453"/>
</dbReference>
<dbReference type="RefSeq" id="NP_723484.1">
    <property type="nucleotide sequence ID" value="NM_164871.3"/>
</dbReference>
<dbReference type="SMR" id="P49906"/>
<dbReference type="BioGRID" id="60390">
    <property type="interactions" value="20"/>
</dbReference>
<dbReference type="DIP" id="DIP-18832N"/>
<dbReference type="FunCoup" id="P49906">
    <property type="interactions" value="757"/>
</dbReference>
<dbReference type="IntAct" id="P49906">
    <property type="interactions" value="12"/>
</dbReference>
<dbReference type="STRING" id="7227.FBpp0079514"/>
<dbReference type="iPTMnet" id="P49906"/>
<dbReference type="PaxDb" id="7227-FBpp0079514"/>
<dbReference type="DNASU" id="34293"/>
<dbReference type="EnsemblMetazoa" id="FBtr0079924">
    <property type="protein sequence ID" value="FBpp0079514"/>
    <property type="gene ID" value="FBgn0011291"/>
</dbReference>
<dbReference type="GeneID" id="34293"/>
<dbReference type="KEGG" id="dme:Dmel_CG4079"/>
<dbReference type="AGR" id="FB:FBgn0011291"/>
<dbReference type="CTD" id="6882"/>
<dbReference type="FlyBase" id="FBgn0011291">
    <property type="gene designation" value="Taf11"/>
</dbReference>
<dbReference type="VEuPathDB" id="VectorBase:FBgn0011291"/>
<dbReference type="eggNOG" id="KOG3219">
    <property type="taxonomic scope" value="Eukaryota"/>
</dbReference>
<dbReference type="GeneTree" id="ENSGT00390000013228"/>
<dbReference type="HOGENOM" id="CLU_088696_0_1_1"/>
<dbReference type="InParanoid" id="P49906"/>
<dbReference type="OMA" id="PTQQKNN"/>
<dbReference type="OrthoDB" id="28335at2759"/>
<dbReference type="PhylomeDB" id="P49906"/>
<dbReference type="Reactome" id="R-DME-674695">
    <property type="pathway name" value="RNA Polymerase II Pre-transcription Events"/>
</dbReference>
<dbReference type="Reactome" id="R-DME-6804756">
    <property type="pathway name" value="Regulation of TP53 Activity through Phosphorylation"/>
</dbReference>
<dbReference type="Reactome" id="R-DME-6807505">
    <property type="pathway name" value="RNA polymerase II transcribes snRNA genes"/>
</dbReference>
<dbReference type="Reactome" id="R-DME-73776">
    <property type="pathway name" value="RNA Polymerase II Promoter Escape"/>
</dbReference>
<dbReference type="Reactome" id="R-DME-73779">
    <property type="pathway name" value="RNA Polymerase II Transcription Pre-Initiation And Promoter Opening"/>
</dbReference>
<dbReference type="Reactome" id="R-DME-75953">
    <property type="pathway name" value="RNA Polymerase II Transcription Initiation"/>
</dbReference>
<dbReference type="Reactome" id="R-DME-76042">
    <property type="pathway name" value="RNA Polymerase II Transcription Initiation And Promoter Clearance"/>
</dbReference>
<dbReference type="SignaLink" id="P49906"/>
<dbReference type="BioGRID-ORCS" id="34293">
    <property type="hits" value="0 hits in 3 CRISPR screens"/>
</dbReference>
<dbReference type="GenomeRNAi" id="34293"/>
<dbReference type="PRO" id="PR:P49906"/>
<dbReference type="Proteomes" id="UP000000803">
    <property type="component" value="Chromosome 2L"/>
</dbReference>
<dbReference type="Bgee" id="FBgn0011291">
    <property type="expression patterns" value="Expressed in adult class III enteroendocrine cell in adult midgut (Drosophila) and 84 other cell types or tissues"/>
</dbReference>
<dbReference type="ExpressionAtlas" id="P49906">
    <property type="expression patterns" value="baseline and differential"/>
</dbReference>
<dbReference type="GO" id="GO:0005737">
    <property type="term" value="C:cytoplasm"/>
    <property type="evidence" value="ECO:0000314"/>
    <property type="project" value="FlyBase"/>
</dbReference>
<dbReference type="GO" id="GO:0036464">
    <property type="term" value="C:cytoplasmic ribonucleoprotein granule"/>
    <property type="evidence" value="ECO:0007669"/>
    <property type="project" value="UniProtKB-SubCell"/>
</dbReference>
<dbReference type="GO" id="GO:0005634">
    <property type="term" value="C:nucleus"/>
    <property type="evidence" value="ECO:0000314"/>
    <property type="project" value="FlyBase"/>
</dbReference>
<dbReference type="GO" id="GO:0005669">
    <property type="term" value="C:transcription factor TFIID complex"/>
    <property type="evidence" value="ECO:0000314"/>
    <property type="project" value="FlyBase"/>
</dbReference>
<dbReference type="GO" id="GO:0046982">
    <property type="term" value="F:protein heterodimerization activity"/>
    <property type="evidence" value="ECO:0007669"/>
    <property type="project" value="InterPro"/>
</dbReference>
<dbReference type="GO" id="GO:0022618">
    <property type="term" value="P:protein-RNA complex assembly"/>
    <property type="evidence" value="ECO:0000353"/>
    <property type="project" value="FlyBase"/>
</dbReference>
<dbReference type="GO" id="GO:0051123">
    <property type="term" value="P:RNA polymerase II preinitiation complex assembly"/>
    <property type="evidence" value="ECO:0000318"/>
    <property type="project" value="GO_Central"/>
</dbReference>
<dbReference type="GO" id="GO:0009616">
    <property type="term" value="P:RNAi-mediated antiviral immune response"/>
    <property type="evidence" value="ECO:0000315"/>
    <property type="project" value="FlyBase"/>
</dbReference>
<dbReference type="GO" id="GO:0006367">
    <property type="term" value="P:transcription initiation at RNA polymerase II promoter"/>
    <property type="evidence" value="ECO:0000250"/>
    <property type="project" value="FlyBase"/>
</dbReference>
<dbReference type="CDD" id="cd08048">
    <property type="entry name" value="HFD_TAF11"/>
    <property type="match status" value="1"/>
</dbReference>
<dbReference type="FunFam" id="1.10.20.10:FF:000025">
    <property type="entry name" value="Transcription initiation factor TFIID subunit 11"/>
    <property type="match status" value="1"/>
</dbReference>
<dbReference type="Gene3D" id="1.10.20.10">
    <property type="entry name" value="Histone, subunit A"/>
    <property type="match status" value="1"/>
</dbReference>
<dbReference type="InterPro" id="IPR009072">
    <property type="entry name" value="Histone-fold"/>
</dbReference>
<dbReference type="InterPro" id="IPR045127">
    <property type="entry name" value="TAF11-like"/>
</dbReference>
<dbReference type="InterPro" id="IPR006809">
    <property type="entry name" value="TAFII28_dom"/>
</dbReference>
<dbReference type="PANTHER" id="PTHR13218:SF8">
    <property type="entry name" value="TRANSCRIPTION INITIATION FACTOR TFIID SUBUNIT 11"/>
    <property type="match status" value="1"/>
</dbReference>
<dbReference type="PANTHER" id="PTHR13218">
    <property type="entry name" value="TRANSCRIPTION INITIATION FACTOR TFIID SUBUNIT 11-RELATED"/>
    <property type="match status" value="1"/>
</dbReference>
<dbReference type="Pfam" id="PF04719">
    <property type="entry name" value="TAFII28"/>
    <property type="match status" value="1"/>
</dbReference>
<dbReference type="SUPFAM" id="SSF47113">
    <property type="entry name" value="Histone-fold"/>
    <property type="match status" value="1"/>
</dbReference>
<accession>P49906</accession>
<accession>Q9VL90</accession>